<feature type="chain" id="PRO_0000050380" description="Solute carrier family 2, facilitated glucose transporter member 11">
    <location>
        <begin position="1"/>
        <end position="496"/>
    </location>
</feature>
<feature type="topological domain" description="Cytoplasmic" evidence="1">
    <location>
        <begin position="1"/>
        <end position="11"/>
    </location>
</feature>
<feature type="transmembrane region" description="Helical; Name=1" evidence="1">
    <location>
        <begin position="12"/>
        <end position="32"/>
    </location>
</feature>
<feature type="topological domain" description="Extracellular" evidence="1">
    <location>
        <begin position="33"/>
        <end position="61"/>
    </location>
</feature>
<feature type="transmembrane region" description="Helical; Name=2" evidence="1">
    <location>
        <begin position="62"/>
        <end position="82"/>
    </location>
</feature>
<feature type="topological domain" description="Cytoplasmic" evidence="1">
    <location>
        <begin position="83"/>
        <end position="97"/>
    </location>
</feature>
<feature type="transmembrane region" description="Helical; Name=3" evidence="1">
    <location>
        <begin position="98"/>
        <end position="118"/>
    </location>
</feature>
<feature type="topological domain" description="Extracellular" evidence="1">
    <location>
        <begin position="119"/>
        <end position="128"/>
    </location>
</feature>
<feature type="transmembrane region" description="Helical; Name=4" evidence="1">
    <location>
        <begin position="129"/>
        <end position="149"/>
    </location>
</feature>
<feature type="topological domain" description="Cytoplasmic" evidence="1">
    <location>
        <begin position="150"/>
        <end position="157"/>
    </location>
</feature>
<feature type="transmembrane region" description="Helical; Name=5" evidence="1">
    <location>
        <begin position="158"/>
        <end position="178"/>
    </location>
</feature>
<feature type="topological domain" description="Extracellular" evidence="1">
    <location>
        <begin position="179"/>
        <end position="187"/>
    </location>
</feature>
<feature type="transmembrane region" description="Helical; Name=6" evidence="1">
    <location>
        <begin position="188"/>
        <end position="208"/>
    </location>
</feature>
<feature type="topological domain" description="Cytoplasmic" evidence="1">
    <location>
        <begin position="209"/>
        <end position="273"/>
    </location>
</feature>
<feature type="transmembrane region" description="Helical; Name=7" evidence="1">
    <location>
        <begin position="274"/>
        <end position="294"/>
    </location>
</feature>
<feature type="topological domain" description="Extracellular" evidence="1">
    <location>
        <begin position="295"/>
        <end position="311"/>
    </location>
</feature>
<feature type="transmembrane region" description="Helical; Name=8" evidence="1">
    <location>
        <begin position="312"/>
        <end position="332"/>
    </location>
</feature>
<feature type="topological domain" description="Cytoplasmic" evidence="1">
    <location>
        <begin position="333"/>
        <end position="338"/>
    </location>
</feature>
<feature type="transmembrane region" description="Helical; Name=9" evidence="1">
    <location>
        <begin position="339"/>
        <end position="359"/>
    </location>
</feature>
<feature type="topological domain" description="Extracellular" evidence="1">
    <location>
        <begin position="360"/>
        <end position="364"/>
    </location>
</feature>
<feature type="transmembrane region" description="Helical; Name=10" evidence="1">
    <location>
        <begin position="365"/>
        <end position="385"/>
    </location>
</feature>
<feature type="topological domain" description="Cytoplasmic" evidence="1">
    <location>
        <begin position="386"/>
        <end position="408"/>
    </location>
</feature>
<feature type="transmembrane region" description="Helical; Name=11" evidence="1">
    <location>
        <begin position="409"/>
        <end position="429"/>
    </location>
</feature>
<feature type="topological domain" description="Extracellular" evidence="1">
    <location>
        <begin position="430"/>
        <end position="435"/>
    </location>
</feature>
<feature type="transmembrane region" description="Helical; Name=12" evidence="1">
    <location>
        <begin position="436"/>
        <end position="456"/>
    </location>
</feature>
<feature type="topological domain" description="Cytoplasmic" evidence="1">
    <location>
        <begin position="457"/>
        <end position="496"/>
    </location>
</feature>
<feature type="glycosylation site" description="N-linked (GlcNAc...) asparagine" evidence="1">
    <location>
        <position position="47"/>
    </location>
</feature>
<feature type="splice variant" id="VSP_006293" description="In isoform 2 and isoform 3." evidence="8">
    <original>MRALRRL</original>
    <variation>MLHALLRSRM</variation>
    <location>
        <begin position="1"/>
        <end position="7"/>
    </location>
</feature>
<feature type="splice variant" id="VSP_045650" description="In isoform 4." evidence="6 7">
    <original>MRALRRL</original>
    <variation>MEDELEPSLRPRTQ</variation>
    <location>
        <begin position="1"/>
        <end position="7"/>
    </location>
</feature>
<feature type="splice variant" id="VSP_006294" description="In isoform 2." evidence="9">
    <original>RELLGGPQAWPLLLASCLVPGALQLASLPLLPESPRYLLIDCGDTEACLAALRRLRGSGDLAGELEE</original>
    <variation>STTAATGLRGLGRGAGGAGGGARCLPGLPCPAPMGAVPASGPEETGDKPRGSGQCHGALRE</variation>
    <location>
        <begin position="179"/>
        <end position="245"/>
    </location>
</feature>
<feature type="splice variant" id="VSP_006295" description="In isoform 2." evidence="9">
    <location>
        <begin position="246"/>
        <end position="496"/>
    </location>
</feature>
<feature type="sequence variant" id="VAR_046704" description="In dbSNP:rs7292659.">
    <original>D</original>
    <variation>N</variation>
    <location>
        <position position="60"/>
    </location>
</feature>
<feature type="sequence variant" id="VAR_046705" description="In dbSNP:rs9608213." evidence="2 4">
    <original>R</original>
    <variation>Q</variation>
    <location>
        <position position="232"/>
    </location>
</feature>
<feature type="sequence variant" id="VAR_061881" description="In dbSNP:rs36015336.">
    <original>R</original>
    <variation>Q</variation>
    <location>
        <position position="301"/>
    </location>
</feature>
<feature type="sequence variant" id="VAR_046706" description="In dbSNP:rs34096096.">
    <original>I</original>
    <variation>F</variation>
    <location>
        <position position="420"/>
    </location>
</feature>
<feature type="sequence variant" id="VAR_061882" description="In dbSNP:rs60882514.">
    <original>K</original>
    <variation>E</variation>
    <location>
        <position position="469"/>
    </location>
</feature>
<feature type="sequence conflict" description="In Ref. 3; AAL39061." evidence="9" ref="3">
    <original>A</original>
    <variation>E</variation>
    <location>
        <position position="229"/>
    </location>
</feature>
<proteinExistence type="evidence at protein level"/>
<accession>Q9BYW1</accession>
<accession>E9PH55</accession>
<accession>Q542Y4</accession>
<accession>Q6ICJ5</accession>
<accession>Q8WXF9</accession>
<accession>Q8WYM4</accession>
<name>GTR11_HUMAN</name>
<reference key="1">
    <citation type="submission" date="2000-02" db="EMBL/GenBank/DDBJ databases">
        <title>Two novel members of the family of sugar transport facilitators: genomic organization and predominant expression in lymphocytes (GLUT9) and muscle (GLUT10).</title>
        <authorList>
            <person name="Doege H."/>
            <person name="Bocianski A."/>
            <person name="Scheepers A."/>
            <person name="Axer H."/>
            <person name="Eckel J."/>
            <person name="Joost H.-G."/>
        </authorList>
    </citation>
    <scope>NUCLEOTIDE SEQUENCE [MRNA] (ISOFORM 1)</scope>
    <source>
        <tissue>Heart</tissue>
    </source>
</reference>
<reference key="2">
    <citation type="journal article" date="2001" name="Biochem. Biophys. Res. Commun.">
        <title>Molecular cloning of a member of the facilitative glucose transporter gene family GLUT11 (SLC2A11) and identification of transcription variants.</title>
        <authorList>
            <person name="Sasaki T."/>
            <person name="Minoshima S."/>
            <person name="Shiohama A."/>
            <person name="Shintani A."/>
            <person name="Shimizu A."/>
            <person name="Asakawa S."/>
            <person name="Kawasaki K."/>
            <person name="Shimizu N."/>
        </authorList>
    </citation>
    <scope>NUCLEOTIDE SEQUENCE [GENOMIC DNA] (ISOFORMS 2 AND 4)</scope>
    <scope>VARIANT GLN-232</scope>
</reference>
<reference key="3">
    <citation type="journal article" date="2002" name="Mol. Genet. Metab.">
        <title>Cloning and characterization of glucose transporter 11, a novel sugar transporter that is alternatively spliced in various tissues.</title>
        <authorList>
            <person name="Wu X."/>
            <person name="Li W."/>
            <person name="Sharma V."/>
            <person name="Godzik A."/>
            <person name="Freeze H.H."/>
        </authorList>
    </citation>
    <scope>NUCLEOTIDE SEQUENCE [MRNA] (ISOFORM 4)</scope>
    <scope>ALTERNATIVE SPLICING</scope>
    <scope>FUNCTION</scope>
    <scope>TRANSPORTER ACTIVITY</scope>
    <scope>SUBCELLULAR LOCATION</scope>
    <scope>TISSUE SPECIFICITY</scope>
</reference>
<reference key="4">
    <citation type="journal article" date="2004" name="Genome Biol.">
        <title>A genome annotation-driven approach to cloning the human ORFeome.</title>
        <authorList>
            <person name="Collins J.E."/>
            <person name="Wright C.L."/>
            <person name="Edwards C.A."/>
            <person name="Davis M.P."/>
            <person name="Grinham J.A."/>
            <person name="Cole C.G."/>
            <person name="Goward M.E."/>
            <person name="Aguado B."/>
            <person name="Mallya M."/>
            <person name="Mokrab Y."/>
            <person name="Huckle E.J."/>
            <person name="Beare D.M."/>
            <person name="Dunham I."/>
        </authorList>
    </citation>
    <scope>NUCLEOTIDE SEQUENCE [LARGE SCALE MRNA] (ISOFORM 3)</scope>
</reference>
<reference key="5">
    <citation type="journal article" date="2004" name="Nat. Genet.">
        <title>Complete sequencing and characterization of 21,243 full-length human cDNAs.</title>
        <authorList>
            <person name="Ota T."/>
            <person name="Suzuki Y."/>
            <person name="Nishikawa T."/>
            <person name="Otsuki T."/>
            <person name="Sugiyama T."/>
            <person name="Irie R."/>
            <person name="Wakamatsu A."/>
            <person name="Hayashi K."/>
            <person name="Sato H."/>
            <person name="Nagai K."/>
            <person name="Kimura K."/>
            <person name="Makita H."/>
            <person name="Sekine M."/>
            <person name="Obayashi M."/>
            <person name="Nishi T."/>
            <person name="Shibahara T."/>
            <person name="Tanaka T."/>
            <person name="Ishii S."/>
            <person name="Yamamoto J."/>
            <person name="Saito K."/>
            <person name="Kawai Y."/>
            <person name="Isono Y."/>
            <person name="Nakamura Y."/>
            <person name="Nagahari K."/>
            <person name="Murakami K."/>
            <person name="Yasuda T."/>
            <person name="Iwayanagi T."/>
            <person name="Wagatsuma M."/>
            <person name="Shiratori A."/>
            <person name="Sudo H."/>
            <person name="Hosoiri T."/>
            <person name="Kaku Y."/>
            <person name="Kodaira H."/>
            <person name="Kondo H."/>
            <person name="Sugawara M."/>
            <person name="Takahashi M."/>
            <person name="Kanda K."/>
            <person name="Yokoi T."/>
            <person name="Furuya T."/>
            <person name="Kikkawa E."/>
            <person name="Omura Y."/>
            <person name="Abe K."/>
            <person name="Kamihara K."/>
            <person name="Katsuta N."/>
            <person name="Sato K."/>
            <person name="Tanikawa M."/>
            <person name="Yamazaki M."/>
            <person name="Ninomiya K."/>
            <person name="Ishibashi T."/>
            <person name="Yamashita H."/>
            <person name="Murakawa K."/>
            <person name="Fujimori K."/>
            <person name="Tanai H."/>
            <person name="Kimata M."/>
            <person name="Watanabe M."/>
            <person name="Hiraoka S."/>
            <person name="Chiba Y."/>
            <person name="Ishida S."/>
            <person name="Ono Y."/>
            <person name="Takiguchi S."/>
            <person name="Watanabe S."/>
            <person name="Yosida M."/>
            <person name="Hotuta T."/>
            <person name="Kusano J."/>
            <person name="Kanehori K."/>
            <person name="Takahashi-Fujii A."/>
            <person name="Hara H."/>
            <person name="Tanase T.-O."/>
            <person name="Nomura Y."/>
            <person name="Togiya S."/>
            <person name="Komai F."/>
            <person name="Hara R."/>
            <person name="Takeuchi K."/>
            <person name="Arita M."/>
            <person name="Imose N."/>
            <person name="Musashino K."/>
            <person name="Yuuki H."/>
            <person name="Oshima A."/>
            <person name="Sasaki N."/>
            <person name="Aotsuka S."/>
            <person name="Yoshikawa Y."/>
            <person name="Matsunawa H."/>
            <person name="Ichihara T."/>
            <person name="Shiohata N."/>
            <person name="Sano S."/>
            <person name="Moriya S."/>
            <person name="Momiyama H."/>
            <person name="Satoh N."/>
            <person name="Takami S."/>
            <person name="Terashima Y."/>
            <person name="Suzuki O."/>
            <person name="Nakagawa S."/>
            <person name="Senoh A."/>
            <person name="Mizoguchi H."/>
            <person name="Goto Y."/>
            <person name="Shimizu F."/>
            <person name="Wakebe H."/>
            <person name="Hishigaki H."/>
            <person name="Watanabe T."/>
            <person name="Sugiyama A."/>
            <person name="Takemoto M."/>
            <person name="Kawakami B."/>
            <person name="Yamazaki M."/>
            <person name="Watanabe K."/>
            <person name="Kumagai A."/>
            <person name="Itakura S."/>
            <person name="Fukuzumi Y."/>
            <person name="Fujimori Y."/>
            <person name="Komiyama M."/>
            <person name="Tashiro H."/>
            <person name="Tanigami A."/>
            <person name="Fujiwara T."/>
            <person name="Ono T."/>
            <person name="Yamada K."/>
            <person name="Fujii Y."/>
            <person name="Ozaki K."/>
            <person name="Hirao M."/>
            <person name="Ohmori Y."/>
            <person name="Kawabata A."/>
            <person name="Hikiji T."/>
            <person name="Kobatake N."/>
            <person name="Inagaki H."/>
            <person name="Ikema Y."/>
            <person name="Okamoto S."/>
            <person name="Okitani R."/>
            <person name="Kawakami T."/>
            <person name="Noguchi S."/>
            <person name="Itoh T."/>
            <person name="Shigeta K."/>
            <person name="Senba T."/>
            <person name="Matsumura K."/>
            <person name="Nakajima Y."/>
            <person name="Mizuno T."/>
            <person name="Morinaga M."/>
            <person name="Sasaki M."/>
            <person name="Togashi T."/>
            <person name="Oyama M."/>
            <person name="Hata H."/>
            <person name="Watanabe M."/>
            <person name="Komatsu T."/>
            <person name="Mizushima-Sugano J."/>
            <person name="Satoh T."/>
            <person name="Shirai Y."/>
            <person name="Takahashi Y."/>
            <person name="Nakagawa K."/>
            <person name="Okumura K."/>
            <person name="Nagase T."/>
            <person name="Nomura N."/>
            <person name="Kikuchi H."/>
            <person name="Masuho Y."/>
            <person name="Yamashita R."/>
            <person name="Nakai K."/>
            <person name="Yada T."/>
            <person name="Nakamura Y."/>
            <person name="Ohara O."/>
            <person name="Isogai T."/>
            <person name="Sugano S."/>
        </authorList>
    </citation>
    <scope>NUCLEOTIDE SEQUENCE [LARGE SCALE MRNA] (ISOFORM 4)</scope>
    <scope>VARIANT GLN-232</scope>
</reference>
<reference key="6">
    <citation type="journal article" date="2005" name="DNA Res.">
        <title>Signal sequence and keyword trap in silico for selection of full-length human cDNAs encoding secretion or membrane proteins from oligo-capped cDNA libraries.</title>
        <authorList>
            <person name="Otsuki T."/>
            <person name="Ota T."/>
            <person name="Nishikawa T."/>
            <person name="Hayashi K."/>
            <person name="Suzuki Y."/>
            <person name="Yamamoto J."/>
            <person name="Wakamatsu A."/>
            <person name="Kimura K."/>
            <person name="Sakamoto K."/>
            <person name="Hatano N."/>
            <person name="Kawai Y."/>
            <person name="Ishii S."/>
            <person name="Saito K."/>
            <person name="Kojima S."/>
            <person name="Sugiyama T."/>
            <person name="Ono T."/>
            <person name="Okano K."/>
            <person name="Yoshikawa Y."/>
            <person name="Aotsuka S."/>
            <person name="Sasaki N."/>
            <person name="Hattori A."/>
            <person name="Okumura K."/>
            <person name="Nagai K."/>
            <person name="Sugano S."/>
            <person name="Isogai T."/>
        </authorList>
    </citation>
    <scope>NUCLEOTIDE SEQUENCE [LARGE SCALE MRNA] (ISOFORM 1)</scope>
    <source>
        <tissue>Placenta</tissue>
    </source>
</reference>
<reference key="7">
    <citation type="journal article" date="1999" name="Nature">
        <title>The DNA sequence of human chromosome 22.</title>
        <authorList>
            <person name="Dunham I."/>
            <person name="Hunt A.R."/>
            <person name="Collins J.E."/>
            <person name="Bruskiewich R."/>
            <person name="Beare D.M."/>
            <person name="Clamp M."/>
            <person name="Smink L.J."/>
            <person name="Ainscough R."/>
            <person name="Almeida J.P."/>
            <person name="Babbage A.K."/>
            <person name="Bagguley C."/>
            <person name="Bailey J."/>
            <person name="Barlow K.F."/>
            <person name="Bates K.N."/>
            <person name="Beasley O.P."/>
            <person name="Bird C.P."/>
            <person name="Blakey S.E."/>
            <person name="Bridgeman A.M."/>
            <person name="Buck D."/>
            <person name="Burgess J."/>
            <person name="Burrill W.D."/>
            <person name="Burton J."/>
            <person name="Carder C."/>
            <person name="Carter N.P."/>
            <person name="Chen Y."/>
            <person name="Clark G."/>
            <person name="Clegg S.M."/>
            <person name="Cobley V.E."/>
            <person name="Cole C.G."/>
            <person name="Collier R.E."/>
            <person name="Connor R."/>
            <person name="Conroy D."/>
            <person name="Corby N.R."/>
            <person name="Coville G.J."/>
            <person name="Cox A.V."/>
            <person name="Davis J."/>
            <person name="Dawson E."/>
            <person name="Dhami P.D."/>
            <person name="Dockree C."/>
            <person name="Dodsworth S.J."/>
            <person name="Durbin R.M."/>
            <person name="Ellington A.G."/>
            <person name="Evans K.L."/>
            <person name="Fey J.M."/>
            <person name="Fleming K."/>
            <person name="French L."/>
            <person name="Garner A.A."/>
            <person name="Gilbert J.G.R."/>
            <person name="Goward M.E."/>
            <person name="Grafham D.V."/>
            <person name="Griffiths M.N.D."/>
            <person name="Hall C."/>
            <person name="Hall R.E."/>
            <person name="Hall-Tamlyn G."/>
            <person name="Heathcott R.W."/>
            <person name="Ho S."/>
            <person name="Holmes S."/>
            <person name="Hunt S.E."/>
            <person name="Jones M.C."/>
            <person name="Kershaw J."/>
            <person name="Kimberley A.M."/>
            <person name="King A."/>
            <person name="Laird G.K."/>
            <person name="Langford C.F."/>
            <person name="Leversha M.A."/>
            <person name="Lloyd C."/>
            <person name="Lloyd D.M."/>
            <person name="Martyn I.D."/>
            <person name="Mashreghi-Mohammadi M."/>
            <person name="Matthews L.H."/>
            <person name="Mccann O.T."/>
            <person name="Mcclay J."/>
            <person name="Mclaren S."/>
            <person name="McMurray A.A."/>
            <person name="Milne S.A."/>
            <person name="Mortimore B.J."/>
            <person name="Odell C.N."/>
            <person name="Pavitt R."/>
            <person name="Pearce A.V."/>
            <person name="Pearson D."/>
            <person name="Phillimore B.J.C.T."/>
            <person name="Phillips S.H."/>
            <person name="Plumb R.W."/>
            <person name="Ramsay H."/>
            <person name="Ramsey Y."/>
            <person name="Rogers L."/>
            <person name="Ross M.T."/>
            <person name="Scott C.E."/>
            <person name="Sehra H.K."/>
            <person name="Skuce C.D."/>
            <person name="Smalley S."/>
            <person name="Smith M.L."/>
            <person name="Soderlund C."/>
            <person name="Spragon L."/>
            <person name="Steward C.A."/>
            <person name="Sulston J.E."/>
            <person name="Swann R.M."/>
            <person name="Vaudin M."/>
            <person name="Wall M."/>
            <person name="Wallis J.M."/>
            <person name="Whiteley M.N."/>
            <person name="Willey D.L."/>
            <person name="Williams L."/>
            <person name="Williams S.A."/>
            <person name="Williamson H."/>
            <person name="Wilmer T.E."/>
            <person name="Wilming L."/>
            <person name="Wright C.L."/>
            <person name="Hubbard T."/>
            <person name="Bentley D.R."/>
            <person name="Beck S."/>
            <person name="Rogers J."/>
            <person name="Shimizu N."/>
            <person name="Minoshima S."/>
            <person name="Kawasaki K."/>
            <person name="Sasaki T."/>
            <person name="Asakawa S."/>
            <person name="Kudoh J."/>
            <person name="Shintani A."/>
            <person name="Shibuya K."/>
            <person name="Yoshizaki Y."/>
            <person name="Aoki N."/>
            <person name="Mitsuyama S."/>
            <person name="Roe B.A."/>
            <person name="Chen F."/>
            <person name="Chu L."/>
            <person name="Crabtree J."/>
            <person name="Deschamps S."/>
            <person name="Do A."/>
            <person name="Do T."/>
            <person name="Dorman A."/>
            <person name="Fang F."/>
            <person name="Fu Y."/>
            <person name="Hu P."/>
            <person name="Hua A."/>
            <person name="Kenton S."/>
            <person name="Lai H."/>
            <person name="Lao H.I."/>
            <person name="Lewis J."/>
            <person name="Lewis S."/>
            <person name="Lin S.-P."/>
            <person name="Loh P."/>
            <person name="Malaj E."/>
            <person name="Nguyen T."/>
            <person name="Pan H."/>
            <person name="Phan S."/>
            <person name="Qi S."/>
            <person name="Qian Y."/>
            <person name="Ray L."/>
            <person name="Ren Q."/>
            <person name="Shaull S."/>
            <person name="Sloan D."/>
            <person name="Song L."/>
            <person name="Wang Q."/>
            <person name="Wang Y."/>
            <person name="Wang Z."/>
            <person name="White J."/>
            <person name="Willingham D."/>
            <person name="Wu H."/>
            <person name="Yao Z."/>
            <person name="Zhan M."/>
            <person name="Zhang G."/>
            <person name="Chissoe S."/>
            <person name="Murray J."/>
            <person name="Miller N."/>
            <person name="Minx P."/>
            <person name="Fulton R."/>
            <person name="Johnson D."/>
            <person name="Bemis G."/>
            <person name="Bentley D."/>
            <person name="Bradshaw H."/>
            <person name="Bourne S."/>
            <person name="Cordes M."/>
            <person name="Du Z."/>
            <person name="Fulton L."/>
            <person name="Goela D."/>
            <person name="Graves T."/>
            <person name="Hawkins J."/>
            <person name="Hinds K."/>
            <person name="Kemp K."/>
            <person name="Latreille P."/>
            <person name="Layman D."/>
            <person name="Ozersky P."/>
            <person name="Rohlfing T."/>
            <person name="Scheet P."/>
            <person name="Walker C."/>
            <person name="Wamsley A."/>
            <person name="Wohldmann P."/>
            <person name="Pepin K."/>
            <person name="Nelson J."/>
            <person name="Korf I."/>
            <person name="Bedell J.A."/>
            <person name="Hillier L.W."/>
            <person name="Mardis E."/>
            <person name="Waterston R."/>
            <person name="Wilson R."/>
            <person name="Emanuel B.S."/>
            <person name="Shaikh T."/>
            <person name="Kurahashi H."/>
            <person name="Saitta S."/>
            <person name="Budarf M.L."/>
            <person name="McDermid H.E."/>
            <person name="Johnson A."/>
            <person name="Wong A.C.C."/>
            <person name="Morrow B.E."/>
            <person name="Edelmann L."/>
            <person name="Kim U.J."/>
            <person name="Shizuya H."/>
            <person name="Simon M.I."/>
            <person name="Dumanski J.P."/>
            <person name="Peyrard M."/>
            <person name="Kedra D."/>
            <person name="Seroussi E."/>
            <person name="Fransson I."/>
            <person name="Tapia I."/>
            <person name="Bruder C.E."/>
            <person name="O'Brien K.P."/>
            <person name="Wilkinson P."/>
            <person name="Bodenteich A."/>
            <person name="Hartman K."/>
            <person name="Hu X."/>
            <person name="Khan A.S."/>
            <person name="Lane L."/>
            <person name="Tilahun Y."/>
            <person name="Wright H."/>
        </authorList>
    </citation>
    <scope>NUCLEOTIDE SEQUENCE [LARGE SCALE GENOMIC DNA]</scope>
</reference>
<reference key="8">
    <citation type="submission" date="2005-07" db="EMBL/GenBank/DDBJ databases">
        <authorList>
            <person name="Mural R.J."/>
            <person name="Istrail S."/>
            <person name="Sutton G."/>
            <person name="Florea L."/>
            <person name="Halpern A.L."/>
            <person name="Mobarry C.M."/>
            <person name="Lippert R."/>
            <person name="Walenz B."/>
            <person name="Shatkay H."/>
            <person name="Dew I."/>
            <person name="Miller J.R."/>
            <person name="Flanigan M.J."/>
            <person name="Edwards N.J."/>
            <person name="Bolanos R."/>
            <person name="Fasulo D."/>
            <person name="Halldorsson B.V."/>
            <person name="Hannenhalli S."/>
            <person name="Turner R."/>
            <person name="Yooseph S."/>
            <person name="Lu F."/>
            <person name="Nusskern D.R."/>
            <person name="Shue B.C."/>
            <person name="Zheng X.H."/>
            <person name="Zhong F."/>
            <person name="Delcher A.L."/>
            <person name="Huson D.H."/>
            <person name="Kravitz S.A."/>
            <person name="Mouchard L."/>
            <person name="Reinert K."/>
            <person name="Remington K.A."/>
            <person name="Clark A.G."/>
            <person name="Waterman M.S."/>
            <person name="Eichler E.E."/>
            <person name="Adams M.D."/>
            <person name="Hunkapiller M.W."/>
            <person name="Myers E.W."/>
            <person name="Venter J.C."/>
        </authorList>
    </citation>
    <scope>NUCLEOTIDE SEQUENCE [LARGE SCALE GENOMIC DNA]</scope>
</reference>
<reference key="9">
    <citation type="journal article" date="2004" name="Genome Res.">
        <title>The status, quality, and expansion of the NIH full-length cDNA project: the Mammalian Gene Collection (MGC).</title>
        <authorList>
            <consortium name="The MGC Project Team"/>
        </authorList>
    </citation>
    <scope>NUCLEOTIDE SEQUENCE [LARGE SCALE MRNA] (ISOFORM 1)</scope>
</reference>
<evidence type="ECO:0000255" key="1"/>
<evidence type="ECO:0000269" key="2">
    <source>
    </source>
</evidence>
<evidence type="ECO:0000269" key="3">
    <source>
    </source>
</evidence>
<evidence type="ECO:0000269" key="4">
    <source>
    </source>
</evidence>
<evidence type="ECO:0000303" key="5">
    <source>
    </source>
</evidence>
<evidence type="ECO:0000303" key="6">
    <source>
    </source>
</evidence>
<evidence type="ECO:0000303" key="7">
    <source>
    </source>
</evidence>
<evidence type="ECO:0000303" key="8">
    <source>
    </source>
</evidence>
<evidence type="ECO:0000305" key="9"/>
<evidence type="ECO:0000305" key="10">
    <source ref="1"/>
</evidence>
<evidence type="ECO:0000312" key="11">
    <source>
        <dbReference type="HGNC" id="HGNC:14239"/>
    </source>
</evidence>
<dbReference type="EMBL" id="AJ271290">
    <property type="protein sequence ID" value="CAC29020.1"/>
    <property type="molecule type" value="mRNA"/>
</dbReference>
<dbReference type="EMBL" id="AB049214">
    <property type="protein sequence ID" value="BAB68410.1"/>
    <property type="molecule type" value="Genomic_DNA"/>
</dbReference>
<dbReference type="EMBL" id="AB067443">
    <property type="protein sequence ID" value="BAB83505.1"/>
    <property type="molecule type" value="Genomic_DNA"/>
</dbReference>
<dbReference type="EMBL" id="AF443201">
    <property type="protein sequence ID" value="AAL39061.1"/>
    <property type="molecule type" value="mRNA"/>
</dbReference>
<dbReference type="EMBL" id="CR456373">
    <property type="protein sequence ID" value="CAG30259.1"/>
    <property type="molecule type" value="mRNA"/>
</dbReference>
<dbReference type="EMBL" id="AK075467">
    <property type="protein sequence ID" value="BAC11637.1"/>
    <property type="molecule type" value="mRNA"/>
</dbReference>
<dbReference type="EMBL" id="AK314502">
    <property type="protein sequence ID" value="BAG37102.1"/>
    <property type="molecule type" value="mRNA"/>
</dbReference>
<dbReference type="EMBL" id="AP000350">
    <property type="status" value="NOT_ANNOTATED_CDS"/>
    <property type="molecule type" value="Genomic_DNA"/>
</dbReference>
<dbReference type="EMBL" id="CH471095">
    <property type="protein sequence ID" value="EAW59618.1"/>
    <property type="molecule type" value="Genomic_DNA"/>
</dbReference>
<dbReference type="EMBL" id="BC100808">
    <property type="protein sequence ID" value="AAI00809.1"/>
    <property type="molecule type" value="mRNA"/>
</dbReference>
<dbReference type="CCDS" id="CCDS13818.1">
    <molecule id="Q9BYW1-4"/>
</dbReference>
<dbReference type="CCDS" id="CCDS33616.1">
    <molecule id="Q9BYW1-3"/>
</dbReference>
<dbReference type="CCDS" id="CCDS46673.1">
    <molecule id="Q9BYW1-1"/>
</dbReference>
<dbReference type="RefSeq" id="NP_001020109.1">
    <molecule id="Q9BYW1-1"/>
    <property type="nucleotide sequence ID" value="NM_001024938.4"/>
</dbReference>
<dbReference type="RefSeq" id="NP_001020110.1">
    <molecule id="Q9BYW1-3"/>
    <property type="nucleotide sequence ID" value="NM_001024939.4"/>
</dbReference>
<dbReference type="RefSeq" id="NP_110434.3">
    <molecule id="Q9BYW1-4"/>
    <property type="nucleotide sequence ID" value="NM_030807.4"/>
</dbReference>
<dbReference type="SMR" id="Q9BYW1"/>
<dbReference type="BioGRID" id="122454">
    <property type="interactions" value="2"/>
</dbReference>
<dbReference type="FunCoup" id="Q9BYW1">
    <property type="interactions" value="364"/>
</dbReference>
<dbReference type="IntAct" id="Q9BYW1">
    <property type="interactions" value="1"/>
</dbReference>
<dbReference type="STRING" id="9606.ENSP00000483038"/>
<dbReference type="DrugBank" id="DB01914">
    <property type="generic name" value="D-glucose"/>
</dbReference>
<dbReference type="DrugBank" id="DB09341">
    <property type="generic name" value="Dextrose, unspecified form"/>
</dbReference>
<dbReference type="DrugBank" id="DB09502">
    <property type="generic name" value="Fludeoxyglucose (18F)"/>
</dbReference>
<dbReference type="TCDB" id="2.A.1.1.44">
    <property type="family name" value="the major facilitator superfamily (mfs)"/>
</dbReference>
<dbReference type="GlyCosmos" id="Q9BYW1">
    <property type="glycosylation" value="1 site, No reported glycans"/>
</dbReference>
<dbReference type="GlyGen" id="Q9BYW1">
    <property type="glycosylation" value="1 site"/>
</dbReference>
<dbReference type="iPTMnet" id="Q9BYW1"/>
<dbReference type="PhosphoSitePlus" id="Q9BYW1"/>
<dbReference type="BioMuta" id="SLC2A11"/>
<dbReference type="DMDM" id="17366685"/>
<dbReference type="MassIVE" id="Q9BYW1"/>
<dbReference type="PaxDb" id="9606-ENSP00000483038"/>
<dbReference type="PeptideAtlas" id="Q9BYW1"/>
<dbReference type="ProteomicsDB" id="20459"/>
<dbReference type="ProteomicsDB" id="79727">
    <molecule id="Q9BYW1-1"/>
</dbReference>
<dbReference type="ProteomicsDB" id="79728">
    <molecule id="Q9BYW1-2"/>
</dbReference>
<dbReference type="ProteomicsDB" id="79729">
    <molecule id="Q9BYW1-3"/>
</dbReference>
<dbReference type="Antibodypedia" id="45145">
    <property type="antibodies" value="29 antibodies from 12 providers"/>
</dbReference>
<dbReference type="DNASU" id="66035"/>
<dbReference type="Ensembl" id="ENST00000316185.9">
    <molecule id="Q9BYW1-3"/>
    <property type="protein sequence ID" value="ENSP00000326748.8"/>
    <property type="gene ID" value="ENSG00000133460.20"/>
</dbReference>
<dbReference type="Ensembl" id="ENST00000345044.10">
    <molecule id="Q9BYW1-1"/>
    <property type="protein sequence ID" value="ENSP00000342542.5"/>
    <property type="gene ID" value="ENSG00000133460.20"/>
</dbReference>
<dbReference type="Ensembl" id="ENST00000398356.6">
    <molecule id="Q9BYW1-4"/>
    <property type="protein sequence ID" value="ENSP00000381399.2"/>
    <property type="gene ID" value="ENSG00000133460.20"/>
</dbReference>
<dbReference type="Ensembl" id="ENST00000618502.4">
    <molecule id="Q9BYW1-1"/>
    <property type="protein sequence ID" value="ENSP00000482495.1"/>
    <property type="gene ID" value="ENSG00000275744.4"/>
</dbReference>
<dbReference type="Ensembl" id="ENST00000619254.4">
    <molecule id="Q9BYW1-4"/>
    <property type="protein sequence ID" value="ENSP00000480839.1"/>
    <property type="gene ID" value="ENSG00000275744.4"/>
</dbReference>
<dbReference type="Ensembl" id="ENST00000620942.4">
    <molecule id="Q9BYW1-3"/>
    <property type="protein sequence ID" value="ENSP00000483163.2"/>
    <property type="gene ID" value="ENSG00000275744.4"/>
</dbReference>
<dbReference type="GeneID" id="66035"/>
<dbReference type="KEGG" id="hsa:66035"/>
<dbReference type="MANE-Select" id="ENST00000316185.9">
    <molecule id="Q9BYW1-3"/>
    <property type="protein sequence ID" value="ENSP00000326748.8"/>
    <property type="RefSeq nucleotide sequence ID" value="NM_001024939.4"/>
    <property type="RefSeq protein sequence ID" value="NP_001020110.1"/>
</dbReference>
<dbReference type="UCSC" id="uc002zym.6">
    <molecule id="Q9BYW1-1"/>
    <property type="organism name" value="human"/>
</dbReference>
<dbReference type="AGR" id="HGNC:14239"/>
<dbReference type="CTD" id="66035"/>
<dbReference type="DisGeNET" id="66035"/>
<dbReference type="GeneCards" id="SLC2A11"/>
<dbReference type="HGNC" id="HGNC:14239">
    <property type="gene designation" value="SLC2A11"/>
</dbReference>
<dbReference type="HPA" id="ENSG00000133460">
    <property type="expression patterns" value="Low tissue specificity"/>
</dbReference>
<dbReference type="MIM" id="610367">
    <property type="type" value="gene"/>
</dbReference>
<dbReference type="neXtProt" id="NX_Q9BYW1"/>
<dbReference type="OpenTargets" id="ENSG00000133460"/>
<dbReference type="PharmGKB" id="PA37861"/>
<dbReference type="VEuPathDB" id="HostDB:ENSG00000133460"/>
<dbReference type="eggNOG" id="KOG0569">
    <property type="taxonomic scope" value="Eukaryota"/>
</dbReference>
<dbReference type="GeneTree" id="ENSGT00940000161061"/>
<dbReference type="HOGENOM" id="CLU_001265_30_11_1"/>
<dbReference type="InParanoid" id="Q9BYW1"/>
<dbReference type="OMA" id="VFFMYPE"/>
<dbReference type="OrthoDB" id="8120565at2759"/>
<dbReference type="PAN-GO" id="Q9BYW1">
    <property type="GO annotations" value="4 GO annotations based on evolutionary models"/>
</dbReference>
<dbReference type="PhylomeDB" id="Q9BYW1"/>
<dbReference type="TreeFam" id="TF313762"/>
<dbReference type="PathwayCommons" id="Q9BYW1"/>
<dbReference type="Reactome" id="R-HSA-189200">
    <property type="pathway name" value="Cellular hexose transport"/>
</dbReference>
<dbReference type="SignaLink" id="Q9BYW1"/>
<dbReference type="BioGRID-ORCS" id="66035">
    <property type="hits" value="13 hits in 1134 CRISPR screens"/>
</dbReference>
<dbReference type="ChiTaRS" id="SLC2A11">
    <property type="organism name" value="human"/>
</dbReference>
<dbReference type="GeneWiki" id="SLC2A11"/>
<dbReference type="GenomeRNAi" id="66035"/>
<dbReference type="Pharos" id="Q9BYW1">
    <property type="development level" value="Tbio"/>
</dbReference>
<dbReference type="PRO" id="PR:Q9BYW1"/>
<dbReference type="Proteomes" id="UP000005640">
    <property type="component" value="Chromosome 22"/>
</dbReference>
<dbReference type="RNAct" id="Q9BYW1">
    <property type="molecule type" value="protein"/>
</dbReference>
<dbReference type="Bgee" id="ENSG00000133460">
    <property type="expression patterns" value="Expressed in right hemisphere of cerebellum and 98 other cell types or tissues"/>
</dbReference>
<dbReference type="ExpressionAtlas" id="Q9BYW1">
    <property type="expression patterns" value="baseline and differential"/>
</dbReference>
<dbReference type="GO" id="GO:0030054">
    <property type="term" value="C:cell junction"/>
    <property type="evidence" value="ECO:0000314"/>
    <property type="project" value="HPA"/>
</dbReference>
<dbReference type="GO" id="GO:0005654">
    <property type="term" value="C:nucleoplasm"/>
    <property type="evidence" value="ECO:0000314"/>
    <property type="project" value="HPA"/>
</dbReference>
<dbReference type="GO" id="GO:0005886">
    <property type="term" value="C:plasma membrane"/>
    <property type="evidence" value="ECO:0000314"/>
    <property type="project" value="UniProtKB"/>
</dbReference>
<dbReference type="GO" id="GO:0055056">
    <property type="term" value="F:D-glucose transmembrane transporter activity"/>
    <property type="evidence" value="ECO:0000314"/>
    <property type="project" value="UniProtKB"/>
</dbReference>
<dbReference type="GO" id="GO:0005353">
    <property type="term" value="F:fructose transmembrane transporter activity"/>
    <property type="evidence" value="ECO:0000314"/>
    <property type="project" value="UniProtKB"/>
</dbReference>
<dbReference type="GO" id="GO:0051119">
    <property type="term" value="F:sugar transmembrane transporter activity"/>
    <property type="evidence" value="ECO:0000304"/>
    <property type="project" value="Reactome"/>
</dbReference>
<dbReference type="GO" id="GO:0046323">
    <property type="term" value="P:D-glucose import"/>
    <property type="evidence" value="ECO:0000318"/>
    <property type="project" value="GO_Central"/>
</dbReference>
<dbReference type="GO" id="GO:1904659">
    <property type="term" value="P:D-glucose transmembrane transport"/>
    <property type="evidence" value="ECO:0000314"/>
    <property type="project" value="UniProtKB"/>
</dbReference>
<dbReference type="GO" id="GO:0070837">
    <property type="term" value="P:dehydroascorbic acid transport"/>
    <property type="evidence" value="ECO:0000318"/>
    <property type="project" value="GO_Central"/>
</dbReference>
<dbReference type="GO" id="GO:0015755">
    <property type="term" value="P:fructose transmembrane transport"/>
    <property type="evidence" value="ECO:0000314"/>
    <property type="project" value="UniProtKB"/>
</dbReference>
<dbReference type="GO" id="GO:0008645">
    <property type="term" value="P:hexose transmembrane transport"/>
    <property type="evidence" value="ECO:0000304"/>
    <property type="project" value="Reactome"/>
</dbReference>
<dbReference type="CDD" id="cd17432">
    <property type="entry name" value="MFS_GLUT_Class2"/>
    <property type="match status" value="1"/>
</dbReference>
<dbReference type="FunFam" id="1.20.1250.20:FF:000029">
    <property type="entry name" value="solute carrier family 2, facilitated glucose transporter member 4"/>
    <property type="match status" value="1"/>
</dbReference>
<dbReference type="Gene3D" id="1.20.1250.20">
    <property type="entry name" value="MFS general substrate transporter like domains"/>
    <property type="match status" value="1"/>
</dbReference>
<dbReference type="InterPro" id="IPR045263">
    <property type="entry name" value="GLUT"/>
</dbReference>
<dbReference type="InterPro" id="IPR020846">
    <property type="entry name" value="MFS_dom"/>
</dbReference>
<dbReference type="InterPro" id="IPR005828">
    <property type="entry name" value="MFS_sugar_transport-like"/>
</dbReference>
<dbReference type="InterPro" id="IPR036259">
    <property type="entry name" value="MFS_trans_sf"/>
</dbReference>
<dbReference type="InterPro" id="IPR003663">
    <property type="entry name" value="Sugar/inositol_transpt"/>
</dbReference>
<dbReference type="InterPro" id="IPR005829">
    <property type="entry name" value="Sugar_transporter_CS"/>
</dbReference>
<dbReference type="NCBIfam" id="TIGR00879">
    <property type="entry name" value="SP"/>
    <property type="match status" value="1"/>
</dbReference>
<dbReference type="PANTHER" id="PTHR23503">
    <property type="entry name" value="SOLUTE CARRIER FAMILY 2"/>
    <property type="match status" value="1"/>
</dbReference>
<dbReference type="PANTHER" id="PTHR23503:SF22">
    <property type="entry name" value="SOLUTE CARRIER FAMILY 2, FACILITATED GLUCOSE TRANSPORTER MEMBER 11"/>
    <property type="match status" value="1"/>
</dbReference>
<dbReference type="Pfam" id="PF00083">
    <property type="entry name" value="Sugar_tr"/>
    <property type="match status" value="1"/>
</dbReference>
<dbReference type="PRINTS" id="PR00171">
    <property type="entry name" value="SUGRTRNSPORT"/>
</dbReference>
<dbReference type="SUPFAM" id="SSF103473">
    <property type="entry name" value="MFS general substrate transporter"/>
    <property type="match status" value="1"/>
</dbReference>
<dbReference type="PROSITE" id="PS50850">
    <property type="entry name" value="MFS"/>
    <property type="match status" value="1"/>
</dbReference>
<dbReference type="PROSITE" id="PS00217">
    <property type="entry name" value="SUGAR_TRANSPORT_2"/>
    <property type="match status" value="1"/>
</dbReference>
<comment type="function">
    <text evidence="3">Facilitative glucose transporter.</text>
</comment>
<comment type="catalytic activity">
    <reaction evidence="3">
        <text>D-glucose(out) = D-glucose(in)</text>
        <dbReference type="Rhea" id="RHEA:60376"/>
        <dbReference type="ChEBI" id="CHEBI:4167"/>
    </reaction>
</comment>
<comment type="subcellular location">
    <subcellularLocation>
        <location evidence="3">Cell membrane</location>
        <topology evidence="1">Multi-pass membrane protein</topology>
    </subcellularLocation>
</comment>
<comment type="alternative products">
    <event type="alternative splicing"/>
    <isoform>
        <id>Q9BYW1-1</id>
        <name>1</name>
        <sequence type="displayed"/>
    </isoform>
    <isoform>
        <id>Q9BYW1-2</id>
        <name>2</name>
        <name evidence="6">GLUT11-s</name>
        <sequence type="described" ref="VSP_006293 VSP_006294 VSP_006295"/>
    </isoform>
    <isoform>
        <id>Q9BYW1-3</id>
        <name>3</name>
        <sequence type="described" ref="VSP_006293"/>
    </isoform>
    <isoform>
        <id>Q9BYW1-4</id>
        <name>4</name>
        <name evidence="6">GLUT11-L</name>
        <sequence type="described" ref="VSP_045650"/>
    </isoform>
</comment>
<comment type="tissue specificity">
    <text evidence="3">Expressed in heart and skeletal muscle.</text>
</comment>
<comment type="similarity">
    <text evidence="9">Belongs to the major facilitator superfamily. Sugar transporter (TC 2.A.1.1) family. Glucose transporter subfamily.</text>
</comment>
<comment type="caution">
    <text evidence="10">Has been described as GLUT10 in literature, but this gene name has already been used for SLC2A10.</text>
</comment>
<organism>
    <name type="scientific">Homo sapiens</name>
    <name type="common">Human</name>
    <dbReference type="NCBI Taxonomy" id="9606"/>
    <lineage>
        <taxon>Eukaryota</taxon>
        <taxon>Metazoa</taxon>
        <taxon>Chordata</taxon>
        <taxon>Craniata</taxon>
        <taxon>Vertebrata</taxon>
        <taxon>Euteleostomi</taxon>
        <taxon>Mammalia</taxon>
        <taxon>Eutheria</taxon>
        <taxon>Euarchontoglires</taxon>
        <taxon>Primates</taxon>
        <taxon>Haplorrhini</taxon>
        <taxon>Catarrhini</taxon>
        <taxon>Hominidae</taxon>
        <taxon>Homo</taxon>
    </lineage>
</organism>
<protein>
    <recommendedName>
        <fullName evidence="9">Solute carrier family 2, facilitated glucose transporter member 11</fullName>
    </recommendedName>
    <alternativeName>
        <fullName evidence="5">Glucose transporter type 11</fullName>
        <shortName evidence="5">GLUT-11</shortName>
    </alternativeName>
</protein>
<gene>
    <name evidence="5 11" type="primary">SLC2A11</name>
    <name evidence="5" type="synonym">GLUT11</name>
</gene>
<keyword id="KW-0025">Alternative splicing</keyword>
<keyword id="KW-1003">Cell membrane</keyword>
<keyword id="KW-0325">Glycoprotein</keyword>
<keyword id="KW-0472">Membrane</keyword>
<keyword id="KW-1267">Proteomics identification</keyword>
<keyword id="KW-1185">Reference proteome</keyword>
<keyword id="KW-0762">Sugar transport</keyword>
<keyword id="KW-0812">Transmembrane</keyword>
<keyword id="KW-1133">Transmembrane helix</keyword>
<keyword id="KW-0813">Transport</keyword>
<sequence>MRALRRLIQGRILLLTICAAGIGGTFQFGYNLSIINAPTLHIQEFTNETWQARTGEPLPDHLVLLMWSLIVSLYPLGGLFGALLAGPLAITLGRKKSLLVNNIFVVSAAILFGFSRKAGSFEMIMLGRLLVGVNAGVSMNIQPMYLGESAPKELRGAVAMSSAIFTALGIVMGQVVGLRELLGGPQAWPLLLASCLVPGALQLASLPLLPESPRYLLIDCGDTEACLAALRRLRGSGDLAGELEELEEERAACQGCRARRPWELFQHRALRRQVTSLVVLGSAMELCGNDSVYAYASSVFRKAGVPEAKIQYAIIGTGSCELLTAVVSCVVIERVGRRVLLIGGYSLMTCWGSIFTVALCLQSSFPWTLYLAMACIFAFILSFGIGPAGVTGILATELFDQMARPAACMVCGALMWIMLILVGLGFPFIMEALSHFLYVPFLGVCVCGAIYTGLFLPETKGKTFQEISKELHRLNFPRRAQGPTWRSLEVIQSTEL</sequence>